<name>CHCH7_MACFA</name>
<proteinExistence type="inferred from homology"/>
<feature type="chain" id="PRO_0000129172" description="Coiled-coil-helix-coiled-coil-helix domain-containing protein 7">
    <location>
        <begin position="1"/>
        <end position="85"/>
    </location>
</feature>
<feature type="domain" description="CHCH" evidence="2">
    <location>
        <begin position="13"/>
        <end position="55"/>
    </location>
</feature>
<feature type="short sequence motif" description="Cx9C motif 1" evidence="2">
    <location>
        <begin position="16"/>
        <end position="26"/>
    </location>
</feature>
<feature type="short sequence motif" description="Cx9C motif 2" evidence="2">
    <location>
        <begin position="37"/>
        <end position="47"/>
    </location>
</feature>
<feature type="disulfide bond" evidence="2">
    <location>
        <begin position="16"/>
        <end position="47"/>
    </location>
</feature>
<feature type="disulfide bond" evidence="2">
    <location>
        <begin position="26"/>
        <end position="37"/>
    </location>
</feature>
<evidence type="ECO:0000250" key="1"/>
<evidence type="ECO:0000255" key="2">
    <source>
        <dbReference type="PROSITE-ProRule" id="PRU01150"/>
    </source>
</evidence>
<evidence type="ECO:0000305" key="3"/>
<gene>
    <name type="primary">CHCHD7</name>
    <name type="ORF">QnpA-16443</name>
</gene>
<reference key="1">
    <citation type="journal article" date="2002" name="Genomics">
        <title>Search for genes positively selected during primate evolution by 5'-end-sequence screening of cynomolgus monkey cDNAs.</title>
        <authorList>
            <person name="Osada N."/>
            <person name="Kusuda J."/>
            <person name="Hirata M."/>
            <person name="Tanuma R."/>
            <person name="Hida M."/>
            <person name="Sugano S."/>
            <person name="Hirai M."/>
            <person name="Hashimoto K."/>
        </authorList>
    </citation>
    <scope>NUCLEOTIDE SEQUENCE [LARGE SCALE MRNA]</scope>
    <source>
        <tissue>Parietal cortex</tissue>
    </source>
</reference>
<comment type="subunit">
    <text evidence="1">Monomer.</text>
</comment>
<comment type="subcellular location">
    <subcellularLocation>
        <location evidence="3">Mitochondrion intermembrane space</location>
    </subcellularLocation>
</comment>
<comment type="similarity">
    <text evidence="3">Belongs to the CHCHD7 family.</text>
</comment>
<keyword id="KW-1015">Disulfide bond</keyword>
<keyword id="KW-0496">Mitochondrion</keyword>
<keyword id="KW-1185">Reference proteome</keyword>
<accession>Q8SPI2</accession>
<sequence length="85" mass="10038">MPVVTGRLRDPDINPCLSESDASTRCLDENNYDKERCSTYFLKYKNCRKFWHSIMMQRRRNGVKPCMPTAAERDEILRAMGKMPY</sequence>
<protein>
    <recommendedName>
        <fullName>Coiled-coil-helix-coiled-coil-helix domain-containing protein 7</fullName>
    </recommendedName>
</protein>
<organism>
    <name type="scientific">Macaca fascicularis</name>
    <name type="common">Crab-eating macaque</name>
    <name type="synonym">Cynomolgus monkey</name>
    <dbReference type="NCBI Taxonomy" id="9541"/>
    <lineage>
        <taxon>Eukaryota</taxon>
        <taxon>Metazoa</taxon>
        <taxon>Chordata</taxon>
        <taxon>Craniata</taxon>
        <taxon>Vertebrata</taxon>
        <taxon>Euteleostomi</taxon>
        <taxon>Mammalia</taxon>
        <taxon>Eutheria</taxon>
        <taxon>Euarchontoglires</taxon>
        <taxon>Primates</taxon>
        <taxon>Haplorrhini</taxon>
        <taxon>Catarrhini</taxon>
        <taxon>Cercopithecidae</taxon>
        <taxon>Cercopithecinae</taxon>
        <taxon>Macaca</taxon>
    </lineage>
</organism>
<dbReference type="EMBL" id="AB072019">
    <property type="protein sequence ID" value="BAB86808.1"/>
    <property type="molecule type" value="mRNA"/>
</dbReference>
<dbReference type="RefSeq" id="XP_005563410.1">
    <property type="nucleotide sequence ID" value="XM_005563353.4"/>
</dbReference>
<dbReference type="RefSeq" id="XP_005563411.1">
    <property type="nucleotide sequence ID" value="XM_005563354.4"/>
</dbReference>
<dbReference type="SMR" id="Q8SPI2"/>
<dbReference type="STRING" id="9541.ENSMFAP00000039306"/>
<dbReference type="GeneID" id="102122073"/>
<dbReference type="KEGG" id="mcf:102122073"/>
<dbReference type="CTD" id="79145"/>
<dbReference type="eggNOG" id="KOG4618">
    <property type="taxonomic scope" value="Eukaryota"/>
</dbReference>
<dbReference type="Proteomes" id="UP000233100">
    <property type="component" value="Unplaced"/>
</dbReference>
<dbReference type="GO" id="GO:0005758">
    <property type="term" value="C:mitochondrial intermembrane space"/>
    <property type="evidence" value="ECO:0007669"/>
    <property type="project" value="UniProtKB-SubCell"/>
</dbReference>
<dbReference type="GO" id="GO:0033108">
    <property type="term" value="P:mitochondrial respiratory chain complex assembly"/>
    <property type="evidence" value="ECO:0007669"/>
    <property type="project" value="TreeGrafter"/>
</dbReference>
<dbReference type="InterPro" id="IPR051040">
    <property type="entry name" value="COX23"/>
</dbReference>
<dbReference type="InterPro" id="IPR048280">
    <property type="entry name" value="COX6B-like"/>
</dbReference>
<dbReference type="InterPro" id="IPR009069">
    <property type="entry name" value="Cys_alpha_HP_mot_SF"/>
</dbReference>
<dbReference type="PANTHER" id="PTHR46811">
    <property type="entry name" value="COILED-COIL-HELIX-COILED-COIL-HELIX DOMAIN-CONTAINING PROTEIN 7"/>
    <property type="match status" value="1"/>
</dbReference>
<dbReference type="PANTHER" id="PTHR46811:SF1">
    <property type="entry name" value="COILED-COIL-HELIX-COILED-COIL-HELIX DOMAIN-CONTAINING PROTEIN 7"/>
    <property type="match status" value="1"/>
</dbReference>
<dbReference type="Pfam" id="PF02297">
    <property type="entry name" value="COX6B"/>
    <property type="match status" value="1"/>
</dbReference>
<dbReference type="SUPFAM" id="SSF47072">
    <property type="entry name" value="Cysteine alpha-hairpin motif"/>
    <property type="match status" value="1"/>
</dbReference>
<dbReference type="PROSITE" id="PS51808">
    <property type="entry name" value="CHCH"/>
    <property type="match status" value="1"/>
</dbReference>